<comment type="subunit">
    <text evidence="1">Part of the 50S ribosomal subunit.</text>
</comment>
<comment type="similarity">
    <text evidence="1">Belongs to the universal ribosomal protein uL30 family.</text>
</comment>
<comment type="sequence caution" evidence="2">
    <conflict type="erroneous initiation">
        <sequence resource="EMBL-CDS" id="ACB89488"/>
    </conflict>
</comment>
<name>RL30_STRPS</name>
<keyword id="KW-0687">Ribonucleoprotein</keyword>
<keyword id="KW-0689">Ribosomal protein</keyword>
<proteinExistence type="inferred from homology"/>
<reference key="1">
    <citation type="journal article" date="2009" name="BMC Genomics">
        <title>Genome evolution driven by host adaptations results in a more virulent and antimicrobial-resistant Streptococcus pneumoniae serotype 14.</title>
        <authorList>
            <person name="Ding F."/>
            <person name="Tang P."/>
            <person name="Hsu M.-H."/>
            <person name="Cui P."/>
            <person name="Hu S."/>
            <person name="Yu J."/>
            <person name="Chiu C.-H."/>
        </authorList>
    </citation>
    <scope>NUCLEOTIDE SEQUENCE [LARGE SCALE GENOMIC DNA]</scope>
    <source>
        <strain>CGSP14</strain>
    </source>
</reference>
<sequence length="60" mass="6459">MAQIKITLTKSPIGRIPSQRKTVVALGLGKLNSFVIKEDNAAIRGMITAVSHLVTVEEVN</sequence>
<gene>
    <name evidence="1" type="primary">rpmD</name>
    <name type="ordered locus">SPCG_0236</name>
</gene>
<feature type="chain" id="PRO_0000347149" description="Large ribosomal subunit protein uL30">
    <location>
        <begin position="1"/>
        <end position="60"/>
    </location>
</feature>
<protein>
    <recommendedName>
        <fullName evidence="1">Large ribosomal subunit protein uL30</fullName>
    </recommendedName>
    <alternativeName>
        <fullName evidence="2">50S ribosomal protein L30</fullName>
    </alternativeName>
</protein>
<dbReference type="EMBL" id="CP001033">
    <property type="protein sequence ID" value="ACB89488.1"/>
    <property type="status" value="ALT_INIT"/>
    <property type="molecule type" value="Genomic_DNA"/>
</dbReference>
<dbReference type="RefSeq" id="WP_000057240.1">
    <property type="nucleotide sequence ID" value="NC_010582.1"/>
</dbReference>
<dbReference type="SMR" id="B2IS58"/>
<dbReference type="KEGG" id="spw:SPCG_0236"/>
<dbReference type="HOGENOM" id="CLU_131047_2_1_9"/>
<dbReference type="GO" id="GO:0022625">
    <property type="term" value="C:cytosolic large ribosomal subunit"/>
    <property type="evidence" value="ECO:0007669"/>
    <property type="project" value="TreeGrafter"/>
</dbReference>
<dbReference type="GO" id="GO:0003735">
    <property type="term" value="F:structural constituent of ribosome"/>
    <property type="evidence" value="ECO:0007669"/>
    <property type="project" value="InterPro"/>
</dbReference>
<dbReference type="GO" id="GO:0006412">
    <property type="term" value="P:translation"/>
    <property type="evidence" value="ECO:0007669"/>
    <property type="project" value="UniProtKB-UniRule"/>
</dbReference>
<dbReference type="CDD" id="cd01658">
    <property type="entry name" value="Ribosomal_L30"/>
    <property type="match status" value="1"/>
</dbReference>
<dbReference type="FunFam" id="3.30.1390.20:FF:000001">
    <property type="entry name" value="50S ribosomal protein L30"/>
    <property type="match status" value="1"/>
</dbReference>
<dbReference type="Gene3D" id="3.30.1390.20">
    <property type="entry name" value="Ribosomal protein L30, ferredoxin-like fold domain"/>
    <property type="match status" value="1"/>
</dbReference>
<dbReference type="HAMAP" id="MF_01371_B">
    <property type="entry name" value="Ribosomal_uL30_B"/>
    <property type="match status" value="1"/>
</dbReference>
<dbReference type="InterPro" id="IPR036919">
    <property type="entry name" value="Ribo_uL30_ferredoxin-like_sf"/>
</dbReference>
<dbReference type="InterPro" id="IPR005996">
    <property type="entry name" value="Ribosomal_uL30_bac-type"/>
</dbReference>
<dbReference type="InterPro" id="IPR018038">
    <property type="entry name" value="Ribosomal_uL30_CS"/>
</dbReference>
<dbReference type="InterPro" id="IPR016082">
    <property type="entry name" value="Ribosomal_uL30_ferredoxin-like"/>
</dbReference>
<dbReference type="NCBIfam" id="TIGR01308">
    <property type="entry name" value="rpmD_bact"/>
    <property type="match status" value="1"/>
</dbReference>
<dbReference type="PANTHER" id="PTHR15892:SF2">
    <property type="entry name" value="LARGE RIBOSOMAL SUBUNIT PROTEIN UL30M"/>
    <property type="match status" value="1"/>
</dbReference>
<dbReference type="PANTHER" id="PTHR15892">
    <property type="entry name" value="MITOCHONDRIAL RIBOSOMAL PROTEIN L30"/>
    <property type="match status" value="1"/>
</dbReference>
<dbReference type="Pfam" id="PF00327">
    <property type="entry name" value="Ribosomal_L30"/>
    <property type="match status" value="1"/>
</dbReference>
<dbReference type="PIRSF" id="PIRSF002211">
    <property type="entry name" value="Ribosomal_L30_bac-type"/>
    <property type="match status" value="1"/>
</dbReference>
<dbReference type="SUPFAM" id="SSF55129">
    <property type="entry name" value="Ribosomal protein L30p/L7e"/>
    <property type="match status" value="1"/>
</dbReference>
<dbReference type="PROSITE" id="PS00634">
    <property type="entry name" value="RIBOSOMAL_L30"/>
    <property type="match status" value="1"/>
</dbReference>
<organism>
    <name type="scientific">Streptococcus pneumoniae (strain CGSP14)</name>
    <dbReference type="NCBI Taxonomy" id="516950"/>
    <lineage>
        <taxon>Bacteria</taxon>
        <taxon>Bacillati</taxon>
        <taxon>Bacillota</taxon>
        <taxon>Bacilli</taxon>
        <taxon>Lactobacillales</taxon>
        <taxon>Streptococcaceae</taxon>
        <taxon>Streptococcus</taxon>
    </lineage>
</organism>
<accession>B2IS58</accession>
<evidence type="ECO:0000255" key="1">
    <source>
        <dbReference type="HAMAP-Rule" id="MF_01371"/>
    </source>
</evidence>
<evidence type="ECO:0000305" key="2"/>